<gene>
    <name evidence="1" type="primary">lipB</name>
    <name type="ordered locus">VF_0743</name>
</gene>
<name>LIPB_ALIF1</name>
<protein>
    <recommendedName>
        <fullName evidence="1">Octanoyltransferase</fullName>
        <ecNumber evidence="1">2.3.1.181</ecNumber>
    </recommendedName>
    <alternativeName>
        <fullName evidence="1">Lipoate-protein ligase B</fullName>
    </alternativeName>
    <alternativeName>
        <fullName evidence="1">Lipoyl/octanoyl transferase</fullName>
    </alternativeName>
    <alternativeName>
        <fullName evidence="1">Octanoyl-[acyl-carrier-protein]-protein N-octanoyltransferase</fullName>
    </alternativeName>
</protein>
<accession>Q5E6V8</accession>
<reference key="1">
    <citation type="journal article" date="2005" name="Proc. Natl. Acad. Sci. U.S.A.">
        <title>Complete genome sequence of Vibrio fischeri: a symbiotic bacterium with pathogenic congeners.</title>
        <authorList>
            <person name="Ruby E.G."/>
            <person name="Urbanowski M."/>
            <person name="Campbell J."/>
            <person name="Dunn A."/>
            <person name="Faini M."/>
            <person name="Gunsalus R."/>
            <person name="Lostroh P."/>
            <person name="Lupp C."/>
            <person name="McCann J."/>
            <person name="Millikan D."/>
            <person name="Schaefer A."/>
            <person name="Stabb E."/>
            <person name="Stevens A."/>
            <person name="Visick K."/>
            <person name="Whistler C."/>
            <person name="Greenberg E.P."/>
        </authorList>
    </citation>
    <scope>NUCLEOTIDE SEQUENCE [LARGE SCALE GENOMIC DNA]</scope>
    <source>
        <strain>ATCC 700601 / ES114</strain>
    </source>
</reference>
<keyword id="KW-0012">Acyltransferase</keyword>
<keyword id="KW-0963">Cytoplasm</keyword>
<keyword id="KW-1185">Reference proteome</keyword>
<keyword id="KW-0808">Transferase</keyword>
<comment type="function">
    <text evidence="1">Catalyzes the transfer of endogenously produced octanoic acid from octanoyl-acyl-carrier-protein onto the lipoyl domains of lipoate-dependent enzymes. Lipoyl-ACP can also act as a substrate although octanoyl-ACP is likely to be the physiological substrate.</text>
</comment>
<comment type="catalytic activity">
    <reaction evidence="1">
        <text>octanoyl-[ACP] + L-lysyl-[protein] = N(6)-octanoyl-L-lysyl-[protein] + holo-[ACP] + H(+)</text>
        <dbReference type="Rhea" id="RHEA:17665"/>
        <dbReference type="Rhea" id="RHEA-COMP:9636"/>
        <dbReference type="Rhea" id="RHEA-COMP:9685"/>
        <dbReference type="Rhea" id="RHEA-COMP:9752"/>
        <dbReference type="Rhea" id="RHEA-COMP:9928"/>
        <dbReference type="ChEBI" id="CHEBI:15378"/>
        <dbReference type="ChEBI" id="CHEBI:29969"/>
        <dbReference type="ChEBI" id="CHEBI:64479"/>
        <dbReference type="ChEBI" id="CHEBI:78463"/>
        <dbReference type="ChEBI" id="CHEBI:78809"/>
        <dbReference type="EC" id="2.3.1.181"/>
    </reaction>
</comment>
<comment type="pathway">
    <text evidence="1">Protein modification; protein lipoylation via endogenous pathway; protein N(6)-(lipoyl)lysine from octanoyl-[acyl-carrier-protein]: step 1/2.</text>
</comment>
<comment type="subcellular location">
    <subcellularLocation>
        <location evidence="1">Cytoplasm</location>
    </subcellularLocation>
</comment>
<comment type="miscellaneous">
    <text evidence="1">In the reaction, the free carboxyl group of octanoic acid is attached via an amide linkage to the epsilon-amino group of a specific lysine residue of lipoyl domains of lipoate-dependent enzymes.</text>
</comment>
<comment type="similarity">
    <text evidence="1">Belongs to the LipB family.</text>
</comment>
<sequence length="225" mass="25441">MNKRLVVKNLGRQDYEPVWKAMHTFTDERDENTCDEVWLVEHNPVFTQGQAGKEEHVLAAGDIPIVKSDRGGQVTYHGPGQLVAYVLINLRRKNIGVRELVTHIENTVINTLSHFNVESAARPDAPGVYVDNKKICSLGLRIRKGCSFHGLALNINMDLSPFLRINPCGYAGMEMIQLHDLVKDNMTVENKAEHVEDVHPLLIKELTTLLDYTDIEYLTESSNHE</sequence>
<dbReference type="EC" id="2.3.1.181" evidence="1"/>
<dbReference type="EMBL" id="CP000020">
    <property type="protein sequence ID" value="AAW85238.1"/>
    <property type="molecule type" value="Genomic_DNA"/>
</dbReference>
<dbReference type="RefSeq" id="WP_011261452.1">
    <property type="nucleotide sequence ID" value="NZ_CAWLES010000001.1"/>
</dbReference>
<dbReference type="RefSeq" id="YP_204126.1">
    <property type="nucleotide sequence ID" value="NC_006840.2"/>
</dbReference>
<dbReference type="SMR" id="Q5E6V8"/>
<dbReference type="STRING" id="312309.VF_0743"/>
<dbReference type="EnsemblBacteria" id="AAW85238">
    <property type="protein sequence ID" value="AAW85238"/>
    <property type="gene ID" value="VF_0743"/>
</dbReference>
<dbReference type="GeneID" id="54163397"/>
<dbReference type="KEGG" id="vfi:VF_0743"/>
<dbReference type="PATRIC" id="fig|312309.11.peg.736"/>
<dbReference type="eggNOG" id="COG0321">
    <property type="taxonomic scope" value="Bacteria"/>
</dbReference>
<dbReference type="HOGENOM" id="CLU_035168_3_1_6"/>
<dbReference type="OrthoDB" id="9787061at2"/>
<dbReference type="UniPathway" id="UPA00538">
    <property type="reaction ID" value="UER00592"/>
</dbReference>
<dbReference type="Proteomes" id="UP000000537">
    <property type="component" value="Chromosome I"/>
</dbReference>
<dbReference type="GO" id="GO:0005737">
    <property type="term" value="C:cytoplasm"/>
    <property type="evidence" value="ECO:0007669"/>
    <property type="project" value="UniProtKB-SubCell"/>
</dbReference>
<dbReference type="GO" id="GO:0033819">
    <property type="term" value="F:lipoyl(octanoyl) transferase activity"/>
    <property type="evidence" value="ECO:0007669"/>
    <property type="project" value="UniProtKB-EC"/>
</dbReference>
<dbReference type="GO" id="GO:0036211">
    <property type="term" value="P:protein modification process"/>
    <property type="evidence" value="ECO:0007669"/>
    <property type="project" value="InterPro"/>
</dbReference>
<dbReference type="CDD" id="cd16444">
    <property type="entry name" value="LipB"/>
    <property type="match status" value="1"/>
</dbReference>
<dbReference type="FunFam" id="3.30.930.10:FF:000020">
    <property type="entry name" value="Octanoyltransferase"/>
    <property type="match status" value="1"/>
</dbReference>
<dbReference type="Gene3D" id="3.30.930.10">
    <property type="entry name" value="Bira Bifunctional Protein, Domain 2"/>
    <property type="match status" value="1"/>
</dbReference>
<dbReference type="HAMAP" id="MF_00013">
    <property type="entry name" value="LipB"/>
    <property type="match status" value="1"/>
</dbReference>
<dbReference type="InterPro" id="IPR045864">
    <property type="entry name" value="aa-tRNA-synth_II/BPL/LPL"/>
</dbReference>
<dbReference type="InterPro" id="IPR004143">
    <property type="entry name" value="BPL_LPL_catalytic"/>
</dbReference>
<dbReference type="InterPro" id="IPR000544">
    <property type="entry name" value="Octanoyltransferase"/>
</dbReference>
<dbReference type="InterPro" id="IPR020605">
    <property type="entry name" value="Octanoyltransferase_CS"/>
</dbReference>
<dbReference type="NCBIfam" id="TIGR00214">
    <property type="entry name" value="lipB"/>
    <property type="match status" value="1"/>
</dbReference>
<dbReference type="NCBIfam" id="NF010922">
    <property type="entry name" value="PRK14342.1"/>
    <property type="match status" value="1"/>
</dbReference>
<dbReference type="PANTHER" id="PTHR10993:SF7">
    <property type="entry name" value="LIPOYLTRANSFERASE 2, MITOCHONDRIAL-RELATED"/>
    <property type="match status" value="1"/>
</dbReference>
<dbReference type="PANTHER" id="PTHR10993">
    <property type="entry name" value="OCTANOYLTRANSFERASE"/>
    <property type="match status" value="1"/>
</dbReference>
<dbReference type="Pfam" id="PF21948">
    <property type="entry name" value="LplA-B_cat"/>
    <property type="match status" value="1"/>
</dbReference>
<dbReference type="PIRSF" id="PIRSF016262">
    <property type="entry name" value="LPLase"/>
    <property type="match status" value="1"/>
</dbReference>
<dbReference type="SUPFAM" id="SSF55681">
    <property type="entry name" value="Class II aaRS and biotin synthetases"/>
    <property type="match status" value="1"/>
</dbReference>
<dbReference type="PROSITE" id="PS51733">
    <property type="entry name" value="BPL_LPL_CATALYTIC"/>
    <property type="match status" value="1"/>
</dbReference>
<dbReference type="PROSITE" id="PS01313">
    <property type="entry name" value="LIPB"/>
    <property type="match status" value="1"/>
</dbReference>
<organism>
    <name type="scientific">Aliivibrio fischeri (strain ATCC 700601 / ES114)</name>
    <name type="common">Vibrio fischeri</name>
    <dbReference type="NCBI Taxonomy" id="312309"/>
    <lineage>
        <taxon>Bacteria</taxon>
        <taxon>Pseudomonadati</taxon>
        <taxon>Pseudomonadota</taxon>
        <taxon>Gammaproteobacteria</taxon>
        <taxon>Vibrionales</taxon>
        <taxon>Vibrionaceae</taxon>
        <taxon>Aliivibrio</taxon>
    </lineage>
</organism>
<feature type="chain" id="PRO_0000062890" description="Octanoyltransferase">
    <location>
        <begin position="1"/>
        <end position="225"/>
    </location>
</feature>
<feature type="domain" description="BPL/LPL catalytic" evidence="2">
    <location>
        <begin position="31"/>
        <end position="214"/>
    </location>
</feature>
<feature type="active site" description="Acyl-thioester intermediate" evidence="1">
    <location>
        <position position="168"/>
    </location>
</feature>
<feature type="binding site" evidence="1">
    <location>
        <begin position="70"/>
        <end position="77"/>
    </location>
    <ligand>
        <name>substrate</name>
    </ligand>
</feature>
<feature type="binding site" evidence="1">
    <location>
        <begin position="137"/>
        <end position="139"/>
    </location>
    <ligand>
        <name>substrate</name>
    </ligand>
</feature>
<feature type="binding site" evidence="1">
    <location>
        <begin position="150"/>
        <end position="152"/>
    </location>
    <ligand>
        <name>substrate</name>
    </ligand>
</feature>
<feature type="site" description="Lowers pKa of active site Cys" evidence="1">
    <location>
        <position position="134"/>
    </location>
</feature>
<evidence type="ECO:0000255" key="1">
    <source>
        <dbReference type="HAMAP-Rule" id="MF_00013"/>
    </source>
</evidence>
<evidence type="ECO:0000255" key="2">
    <source>
        <dbReference type="PROSITE-ProRule" id="PRU01067"/>
    </source>
</evidence>
<proteinExistence type="inferred from homology"/>